<proteinExistence type="inferred from homology"/>
<keyword id="KW-0413">Isomerase</keyword>
<keyword id="KW-1185">Reference proteome</keyword>
<reference key="1">
    <citation type="journal article" date="2009" name="BMC Genomics">
        <title>Evidence for niche adaptation in the genome of the bovine pathogen Streptococcus uberis.</title>
        <authorList>
            <person name="Ward P.N."/>
            <person name="Holden M.T.G."/>
            <person name="Leigh J.A."/>
            <person name="Lennard N."/>
            <person name="Bignell A."/>
            <person name="Barron A."/>
            <person name="Clark L."/>
            <person name="Quail M.A."/>
            <person name="Woodward J."/>
            <person name="Barrell B.G."/>
            <person name="Egan S.A."/>
            <person name="Field T.R."/>
            <person name="Maskell D."/>
            <person name="Kehoe M."/>
            <person name="Dowson C.G."/>
            <person name="Chanter N."/>
            <person name="Whatmore A.M."/>
            <person name="Bentley S.D."/>
            <person name="Parkhill J."/>
        </authorList>
    </citation>
    <scope>NUCLEOTIDE SEQUENCE [LARGE SCALE GENOMIC DNA]</scope>
    <source>
        <strain>ATCC BAA-854 / 0140J</strain>
    </source>
</reference>
<evidence type="ECO:0000255" key="1">
    <source>
        <dbReference type="HAMAP-Rule" id="MF_00170"/>
    </source>
</evidence>
<dbReference type="EC" id="5.3.1.6" evidence="1"/>
<dbReference type="EMBL" id="AM946015">
    <property type="protein sequence ID" value="CAR42338.1"/>
    <property type="molecule type" value="Genomic_DNA"/>
</dbReference>
<dbReference type="RefSeq" id="WP_012658546.1">
    <property type="nucleotide sequence ID" value="NC_012004.1"/>
</dbReference>
<dbReference type="SMR" id="B9DUK4"/>
<dbReference type="STRING" id="218495.SUB1050"/>
<dbReference type="KEGG" id="sub:SUB1050"/>
<dbReference type="eggNOG" id="COG0120">
    <property type="taxonomic scope" value="Bacteria"/>
</dbReference>
<dbReference type="HOGENOM" id="CLU_056590_1_0_9"/>
<dbReference type="OrthoDB" id="5870696at2"/>
<dbReference type="UniPathway" id="UPA00115">
    <property type="reaction ID" value="UER00412"/>
</dbReference>
<dbReference type="Proteomes" id="UP000000449">
    <property type="component" value="Chromosome"/>
</dbReference>
<dbReference type="GO" id="GO:0004751">
    <property type="term" value="F:ribose-5-phosphate isomerase activity"/>
    <property type="evidence" value="ECO:0007669"/>
    <property type="project" value="UniProtKB-UniRule"/>
</dbReference>
<dbReference type="GO" id="GO:0009052">
    <property type="term" value="P:pentose-phosphate shunt, non-oxidative branch"/>
    <property type="evidence" value="ECO:0007669"/>
    <property type="project" value="UniProtKB-UniRule"/>
</dbReference>
<dbReference type="CDD" id="cd01398">
    <property type="entry name" value="RPI_A"/>
    <property type="match status" value="1"/>
</dbReference>
<dbReference type="FunFam" id="3.40.50.1360:FF:000001">
    <property type="entry name" value="Ribose-5-phosphate isomerase A"/>
    <property type="match status" value="1"/>
</dbReference>
<dbReference type="Gene3D" id="3.30.70.260">
    <property type="match status" value="1"/>
</dbReference>
<dbReference type="Gene3D" id="3.40.50.1360">
    <property type="match status" value="1"/>
</dbReference>
<dbReference type="HAMAP" id="MF_00170">
    <property type="entry name" value="Rib_5P_isom_A"/>
    <property type="match status" value="1"/>
</dbReference>
<dbReference type="InterPro" id="IPR037171">
    <property type="entry name" value="NagB/RpiA_transferase-like"/>
</dbReference>
<dbReference type="InterPro" id="IPR050262">
    <property type="entry name" value="Ribose-5P_isomerase"/>
</dbReference>
<dbReference type="InterPro" id="IPR020672">
    <property type="entry name" value="Ribose5P_isomerase_typA_subgr"/>
</dbReference>
<dbReference type="InterPro" id="IPR004788">
    <property type="entry name" value="Ribose5P_isomerase_type_A"/>
</dbReference>
<dbReference type="NCBIfam" id="NF001924">
    <property type="entry name" value="PRK00702.1"/>
    <property type="match status" value="1"/>
</dbReference>
<dbReference type="NCBIfam" id="TIGR00021">
    <property type="entry name" value="rpiA"/>
    <property type="match status" value="1"/>
</dbReference>
<dbReference type="PANTHER" id="PTHR43748">
    <property type="entry name" value="RIBOSE-5-PHOSPHATE ISOMERASE 3, CHLOROPLASTIC-RELATED"/>
    <property type="match status" value="1"/>
</dbReference>
<dbReference type="PANTHER" id="PTHR43748:SF3">
    <property type="entry name" value="RIBOSE-5-PHOSPHATE ISOMERASE 3, CHLOROPLASTIC-RELATED"/>
    <property type="match status" value="1"/>
</dbReference>
<dbReference type="Pfam" id="PF06026">
    <property type="entry name" value="Rib_5-P_isom_A"/>
    <property type="match status" value="1"/>
</dbReference>
<dbReference type="SUPFAM" id="SSF75445">
    <property type="entry name" value="D-ribose-5-phosphate isomerase (RpiA), lid domain"/>
    <property type="match status" value="1"/>
</dbReference>
<dbReference type="SUPFAM" id="SSF100950">
    <property type="entry name" value="NagB/RpiA/CoA transferase-like"/>
    <property type="match status" value="1"/>
</dbReference>
<accession>B9DUK4</accession>
<sequence>MEALKKMAGVTAAQYVKDGMIVGLGTGSTAYFFVEEIGRRVNEEGLQVVGVTTSSATTKQAESLGIPLKAVDEIDEIDLTVDGADEVDKEFNGIKGGGAALLMEKIVATPTKEYIWVVDESKMVEKLGAFKLPVEVVQYGAERLFRVFEKAGYNPSFRMKEDQKLITDMGNFIIDLDLKVIEKPFEFAEMLDKTVGVVEHGLFNGMVHKVIVAGKDGVKVLEAPSK</sequence>
<organism>
    <name type="scientific">Streptococcus uberis (strain ATCC BAA-854 / 0140J)</name>
    <dbReference type="NCBI Taxonomy" id="218495"/>
    <lineage>
        <taxon>Bacteria</taxon>
        <taxon>Bacillati</taxon>
        <taxon>Bacillota</taxon>
        <taxon>Bacilli</taxon>
        <taxon>Lactobacillales</taxon>
        <taxon>Streptococcaceae</taxon>
        <taxon>Streptococcus</taxon>
    </lineage>
</organism>
<feature type="chain" id="PRO_1000194728" description="Ribose-5-phosphate isomerase A">
    <location>
        <begin position="1"/>
        <end position="226"/>
    </location>
</feature>
<feature type="active site" description="Proton acceptor" evidence="1">
    <location>
        <position position="104"/>
    </location>
</feature>
<feature type="binding site" evidence="1">
    <location>
        <begin position="26"/>
        <end position="29"/>
    </location>
    <ligand>
        <name>substrate</name>
    </ligand>
</feature>
<feature type="binding site" evidence="1">
    <location>
        <begin position="82"/>
        <end position="85"/>
    </location>
    <ligand>
        <name>substrate</name>
    </ligand>
</feature>
<feature type="binding site" evidence="1">
    <location>
        <begin position="95"/>
        <end position="98"/>
    </location>
    <ligand>
        <name>substrate</name>
    </ligand>
</feature>
<feature type="binding site" evidence="1">
    <location>
        <position position="122"/>
    </location>
    <ligand>
        <name>substrate</name>
    </ligand>
</feature>
<protein>
    <recommendedName>
        <fullName evidence="1">Ribose-5-phosphate isomerase A</fullName>
        <ecNumber evidence="1">5.3.1.6</ecNumber>
    </recommendedName>
    <alternativeName>
        <fullName evidence="1">Phosphoriboisomerase A</fullName>
        <shortName evidence="1">PRI</shortName>
    </alternativeName>
</protein>
<comment type="function">
    <text evidence="1">Catalyzes the reversible conversion of ribose-5-phosphate to ribulose 5-phosphate.</text>
</comment>
<comment type="catalytic activity">
    <reaction evidence="1">
        <text>aldehydo-D-ribose 5-phosphate = D-ribulose 5-phosphate</text>
        <dbReference type="Rhea" id="RHEA:14657"/>
        <dbReference type="ChEBI" id="CHEBI:58121"/>
        <dbReference type="ChEBI" id="CHEBI:58273"/>
        <dbReference type="EC" id="5.3.1.6"/>
    </reaction>
</comment>
<comment type="pathway">
    <text evidence="1">Carbohydrate degradation; pentose phosphate pathway; D-ribose 5-phosphate from D-ribulose 5-phosphate (non-oxidative stage): step 1/1.</text>
</comment>
<comment type="subunit">
    <text evidence="1">Homodimer.</text>
</comment>
<comment type="similarity">
    <text evidence="1">Belongs to the ribose 5-phosphate isomerase family.</text>
</comment>
<gene>
    <name evidence="1" type="primary">rpiA</name>
    <name type="ordered locus">SUB1050</name>
</gene>
<name>RPIA_STRU0</name>